<name>GPMA_STRU0</name>
<dbReference type="EC" id="5.4.2.11" evidence="1"/>
<dbReference type="EMBL" id="AM946015">
    <property type="protein sequence ID" value="CAR42753.1"/>
    <property type="molecule type" value="Genomic_DNA"/>
</dbReference>
<dbReference type="RefSeq" id="WP_012658737.1">
    <property type="nucleotide sequence ID" value="NC_012004.1"/>
</dbReference>
<dbReference type="SMR" id="B9DUS6"/>
<dbReference type="STRING" id="218495.SUB1263"/>
<dbReference type="KEGG" id="sub:SUB1263"/>
<dbReference type="eggNOG" id="COG0588">
    <property type="taxonomic scope" value="Bacteria"/>
</dbReference>
<dbReference type="HOGENOM" id="CLU_033323_1_5_9"/>
<dbReference type="OrthoDB" id="9781415at2"/>
<dbReference type="UniPathway" id="UPA00109">
    <property type="reaction ID" value="UER00186"/>
</dbReference>
<dbReference type="Proteomes" id="UP000000449">
    <property type="component" value="Chromosome"/>
</dbReference>
<dbReference type="GO" id="GO:0004619">
    <property type="term" value="F:phosphoglycerate mutase activity"/>
    <property type="evidence" value="ECO:0007669"/>
    <property type="project" value="UniProtKB-EC"/>
</dbReference>
<dbReference type="GO" id="GO:0006094">
    <property type="term" value="P:gluconeogenesis"/>
    <property type="evidence" value="ECO:0007669"/>
    <property type="project" value="UniProtKB-UniRule"/>
</dbReference>
<dbReference type="GO" id="GO:0006096">
    <property type="term" value="P:glycolytic process"/>
    <property type="evidence" value="ECO:0007669"/>
    <property type="project" value="UniProtKB-UniRule"/>
</dbReference>
<dbReference type="CDD" id="cd07067">
    <property type="entry name" value="HP_PGM_like"/>
    <property type="match status" value="1"/>
</dbReference>
<dbReference type="FunFam" id="3.40.50.1240:FF:000003">
    <property type="entry name" value="2,3-bisphosphoglycerate-dependent phosphoglycerate mutase"/>
    <property type="match status" value="1"/>
</dbReference>
<dbReference type="Gene3D" id="3.40.50.1240">
    <property type="entry name" value="Phosphoglycerate mutase-like"/>
    <property type="match status" value="1"/>
</dbReference>
<dbReference type="HAMAP" id="MF_01039">
    <property type="entry name" value="PGAM_GpmA"/>
    <property type="match status" value="1"/>
</dbReference>
<dbReference type="InterPro" id="IPR013078">
    <property type="entry name" value="His_Pase_superF_clade-1"/>
</dbReference>
<dbReference type="InterPro" id="IPR029033">
    <property type="entry name" value="His_PPase_superfam"/>
</dbReference>
<dbReference type="InterPro" id="IPR005952">
    <property type="entry name" value="Phosphogly_mut1"/>
</dbReference>
<dbReference type="NCBIfam" id="TIGR01258">
    <property type="entry name" value="pgm_1"/>
    <property type="match status" value="1"/>
</dbReference>
<dbReference type="NCBIfam" id="NF010713">
    <property type="entry name" value="PRK14115.1"/>
    <property type="match status" value="1"/>
</dbReference>
<dbReference type="NCBIfam" id="NF010715">
    <property type="entry name" value="PRK14117.1"/>
    <property type="match status" value="1"/>
</dbReference>
<dbReference type="PANTHER" id="PTHR11931">
    <property type="entry name" value="PHOSPHOGLYCERATE MUTASE"/>
    <property type="match status" value="1"/>
</dbReference>
<dbReference type="Pfam" id="PF00300">
    <property type="entry name" value="His_Phos_1"/>
    <property type="match status" value="1"/>
</dbReference>
<dbReference type="PIRSF" id="PIRSF000709">
    <property type="entry name" value="6PFK_2-Ptase"/>
    <property type="match status" value="1"/>
</dbReference>
<dbReference type="SMART" id="SM00855">
    <property type="entry name" value="PGAM"/>
    <property type="match status" value="1"/>
</dbReference>
<dbReference type="SUPFAM" id="SSF53254">
    <property type="entry name" value="Phosphoglycerate mutase-like"/>
    <property type="match status" value="1"/>
</dbReference>
<reference key="1">
    <citation type="journal article" date="2009" name="BMC Genomics">
        <title>Evidence for niche adaptation in the genome of the bovine pathogen Streptococcus uberis.</title>
        <authorList>
            <person name="Ward P.N."/>
            <person name="Holden M.T.G."/>
            <person name="Leigh J.A."/>
            <person name="Lennard N."/>
            <person name="Bignell A."/>
            <person name="Barron A."/>
            <person name="Clark L."/>
            <person name="Quail M.A."/>
            <person name="Woodward J."/>
            <person name="Barrell B.G."/>
            <person name="Egan S.A."/>
            <person name="Field T.R."/>
            <person name="Maskell D."/>
            <person name="Kehoe M."/>
            <person name="Dowson C.G."/>
            <person name="Chanter N."/>
            <person name="Whatmore A.M."/>
            <person name="Bentley S.D."/>
            <person name="Parkhill J."/>
        </authorList>
    </citation>
    <scope>NUCLEOTIDE SEQUENCE [LARGE SCALE GENOMIC DNA]</scope>
    <source>
        <strain>ATCC BAA-854 / 0140J</strain>
    </source>
</reference>
<evidence type="ECO:0000255" key="1">
    <source>
        <dbReference type="HAMAP-Rule" id="MF_01039"/>
    </source>
</evidence>
<gene>
    <name evidence="1" type="primary">gpmA</name>
    <name type="ordered locus">SUB1263</name>
</gene>
<organism>
    <name type="scientific">Streptococcus uberis (strain ATCC BAA-854 / 0140J)</name>
    <dbReference type="NCBI Taxonomy" id="218495"/>
    <lineage>
        <taxon>Bacteria</taxon>
        <taxon>Bacillati</taxon>
        <taxon>Bacillota</taxon>
        <taxon>Bacilli</taxon>
        <taxon>Lactobacillales</taxon>
        <taxon>Streptococcaceae</taxon>
        <taxon>Streptococcus</taxon>
    </lineage>
</organism>
<proteinExistence type="inferred from homology"/>
<sequence length="230" mass="26161">MVKLVFARHGESEWNKANLFTGWADVDLSEKGTQQAIDAGKLIKEAGIEFDLAFTSVLKRAIKTTNLALEYSDQLWVPVEKSWRLNERHYGGLTGKNKAEAAEQFGDEQVHIWRRSYDVLPPDMAKDDEHSAHTDRRYAHLDSSVIPDAENLKVTLERALPFWEDKIAPALVDGKNVFIGAHGNSIRALVKHIKRLNDDEIMDVEIPNFPPLVFEFDEKLNVTAEYYLGK</sequence>
<protein>
    <recommendedName>
        <fullName evidence="1">2,3-bisphosphoglycerate-dependent phosphoglycerate mutase</fullName>
        <shortName evidence="1">BPG-dependent PGAM</shortName>
        <shortName evidence="1">PGAM</shortName>
        <shortName evidence="1">Phosphoglyceromutase</shortName>
        <shortName evidence="1">dPGM</shortName>
        <ecNumber evidence="1">5.4.2.11</ecNumber>
    </recommendedName>
</protein>
<accession>B9DUS6</accession>
<keyword id="KW-0312">Gluconeogenesis</keyword>
<keyword id="KW-0324">Glycolysis</keyword>
<keyword id="KW-0413">Isomerase</keyword>
<keyword id="KW-1185">Reference proteome</keyword>
<feature type="chain" id="PRO_1000149534" description="2,3-bisphosphoglycerate-dependent phosphoglycerate mutase">
    <location>
        <begin position="1"/>
        <end position="230"/>
    </location>
</feature>
<feature type="active site" description="Tele-phosphohistidine intermediate" evidence="1">
    <location>
        <position position="9"/>
    </location>
</feature>
<feature type="active site" description="Proton donor/acceptor" evidence="1">
    <location>
        <position position="87"/>
    </location>
</feature>
<feature type="binding site" evidence="1">
    <location>
        <begin position="8"/>
        <end position="15"/>
    </location>
    <ligand>
        <name>substrate</name>
    </ligand>
</feature>
<feature type="binding site" evidence="1">
    <location>
        <begin position="21"/>
        <end position="22"/>
    </location>
    <ligand>
        <name>substrate</name>
    </ligand>
</feature>
<feature type="binding site" evidence="1">
    <location>
        <position position="60"/>
    </location>
    <ligand>
        <name>substrate</name>
    </ligand>
</feature>
<feature type="binding site" evidence="1">
    <location>
        <begin position="87"/>
        <end position="90"/>
    </location>
    <ligand>
        <name>substrate</name>
    </ligand>
</feature>
<feature type="binding site" evidence="1">
    <location>
        <position position="98"/>
    </location>
    <ligand>
        <name>substrate</name>
    </ligand>
</feature>
<feature type="binding site" evidence="1">
    <location>
        <begin position="114"/>
        <end position="115"/>
    </location>
    <ligand>
        <name>substrate</name>
    </ligand>
</feature>
<feature type="binding site" evidence="1">
    <location>
        <begin position="183"/>
        <end position="184"/>
    </location>
    <ligand>
        <name>substrate</name>
    </ligand>
</feature>
<feature type="site" description="Transition state stabilizer" evidence="1">
    <location>
        <position position="182"/>
    </location>
</feature>
<comment type="function">
    <text evidence="1">Catalyzes the interconversion of 2-phosphoglycerate and 3-phosphoglycerate.</text>
</comment>
<comment type="catalytic activity">
    <reaction evidence="1">
        <text>(2R)-2-phosphoglycerate = (2R)-3-phosphoglycerate</text>
        <dbReference type="Rhea" id="RHEA:15901"/>
        <dbReference type="ChEBI" id="CHEBI:58272"/>
        <dbReference type="ChEBI" id="CHEBI:58289"/>
        <dbReference type="EC" id="5.4.2.11"/>
    </reaction>
</comment>
<comment type="pathway">
    <text evidence="1">Carbohydrate degradation; glycolysis; pyruvate from D-glyceraldehyde 3-phosphate: step 3/5.</text>
</comment>
<comment type="similarity">
    <text evidence="1">Belongs to the phosphoglycerate mutase family. BPG-dependent PGAM subfamily.</text>
</comment>